<proteinExistence type="inferred from homology"/>
<protein>
    <recommendedName>
        <fullName evidence="1">Large ribosomal subunit protein uL13</fullName>
    </recommendedName>
    <alternativeName>
        <fullName evidence="2">50S ribosomal protein L13</fullName>
    </alternativeName>
</protein>
<evidence type="ECO:0000255" key="1">
    <source>
        <dbReference type="HAMAP-Rule" id="MF_01366"/>
    </source>
</evidence>
<evidence type="ECO:0000305" key="2"/>
<accession>B1Y3K7</accession>
<comment type="function">
    <text evidence="1">This protein is one of the early assembly proteins of the 50S ribosomal subunit, although it is not seen to bind rRNA by itself. It is important during the early stages of 50S assembly.</text>
</comment>
<comment type="subunit">
    <text evidence="1">Part of the 50S ribosomal subunit.</text>
</comment>
<comment type="similarity">
    <text evidence="1">Belongs to the universal ribosomal protein uL13 family.</text>
</comment>
<feature type="chain" id="PRO_1000144146" description="Large ribosomal subunit protein uL13">
    <location>
        <begin position="1"/>
        <end position="142"/>
    </location>
</feature>
<gene>
    <name evidence="1" type="primary">rplM</name>
    <name type="ordered locus">Lcho_3452</name>
</gene>
<dbReference type="EMBL" id="CP001013">
    <property type="protein sequence ID" value="ACB35710.1"/>
    <property type="molecule type" value="Genomic_DNA"/>
</dbReference>
<dbReference type="RefSeq" id="WP_012348457.1">
    <property type="nucleotide sequence ID" value="NC_010524.1"/>
</dbReference>
<dbReference type="SMR" id="B1Y3K7"/>
<dbReference type="STRING" id="395495.Lcho_3452"/>
<dbReference type="KEGG" id="lch:Lcho_3452"/>
<dbReference type="eggNOG" id="COG0102">
    <property type="taxonomic scope" value="Bacteria"/>
</dbReference>
<dbReference type="HOGENOM" id="CLU_082184_2_2_4"/>
<dbReference type="OrthoDB" id="9801330at2"/>
<dbReference type="Proteomes" id="UP000001693">
    <property type="component" value="Chromosome"/>
</dbReference>
<dbReference type="GO" id="GO:0022625">
    <property type="term" value="C:cytosolic large ribosomal subunit"/>
    <property type="evidence" value="ECO:0007669"/>
    <property type="project" value="TreeGrafter"/>
</dbReference>
<dbReference type="GO" id="GO:0003729">
    <property type="term" value="F:mRNA binding"/>
    <property type="evidence" value="ECO:0007669"/>
    <property type="project" value="TreeGrafter"/>
</dbReference>
<dbReference type="GO" id="GO:0003735">
    <property type="term" value="F:structural constituent of ribosome"/>
    <property type="evidence" value="ECO:0007669"/>
    <property type="project" value="InterPro"/>
</dbReference>
<dbReference type="GO" id="GO:0017148">
    <property type="term" value="P:negative regulation of translation"/>
    <property type="evidence" value="ECO:0007669"/>
    <property type="project" value="TreeGrafter"/>
</dbReference>
<dbReference type="GO" id="GO:0006412">
    <property type="term" value="P:translation"/>
    <property type="evidence" value="ECO:0007669"/>
    <property type="project" value="UniProtKB-UniRule"/>
</dbReference>
<dbReference type="CDD" id="cd00392">
    <property type="entry name" value="Ribosomal_L13"/>
    <property type="match status" value="1"/>
</dbReference>
<dbReference type="FunFam" id="3.90.1180.10:FF:000001">
    <property type="entry name" value="50S ribosomal protein L13"/>
    <property type="match status" value="1"/>
</dbReference>
<dbReference type="Gene3D" id="3.90.1180.10">
    <property type="entry name" value="Ribosomal protein L13"/>
    <property type="match status" value="1"/>
</dbReference>
<dbReference type="HAMAP" id="MF_01366">
    <property type="entry name" value="Ribosomal_uL13"/>
    <property type="match status" value="1"/>
</dbReference>
<dbReference type="InterPro" id="IPR005822">
    <property type="entry name" value="Ribosomal_uL13"/>
</dbReference>
<dbReference type="InterPro" id="IPR005823">
    <property type="entry name" value="Ribosomal_uL13_bac-type"/>
</dbReference>
<dbReference type="InterPro" id="IPR036899">
    <property type="entry name" value="Ribosomal_uL13_sf"/>
</dbReference>
<dbReference type="NCBIfam" id="TIGR01066">
    <property type="entry name" value="rplM_bact"/>
    <property type="match status" value="1"/>
</dbReference>
<dbReference type="PANTHER" id="PTHR11545:SF2">
    <property type="entry name" value="LARGE RIBOSOMAL SUBUNIT PROTEIN UL13M"/>
    <property type="match status" value="1"/>
</dbReference>
<dbReference type="PANTHER" id="PTHR11545">
    <property type="entry name" value="RIBOSOMAL PROTEIN L13"/>
    <property type="match status" value="1"/>
</dbReference>
<dbReference type="Pfam" id="PF00572">
    <property type="entry name" value="Ribosomal_L13"/>
    <property type="match status" value="1"/>
</dbReference>
<dbReference type="PIRSF" id="PIRSF002181">
    <property type="entry name" value="Ribosomal_L13"/>
    <property type="match status" value="1"/>
</dbReference>
<dbReference type="SUPFAM" id="SSF52161">
    <property type="entry name" value="Ribosomal protein L13"/>
    <property type="match status" value="1"/>
</dbReference>
<organism>
    <name type="scientific">Leptothrix cholodnii (strain ATCC 51168 / LMG 8142 / SP-6)</name>
    <name type="common">Leptothrix discophora (strain SP-6)</name>
    <dbReference type="NCBI Taxonomy" id="395495"/>
    <lineage>
        <taxon>Bacteria</taxon>
        <taxon>Pseudomonadati</taxon>
        <taxon>Pseudomonadota</taxon>
        <taxon>Betaproteobacteria</taxon>
        <taxon>Burkholderiales</taxon>
        <taxon>Sphaerotilaceae</taxon>
        <taxon>Leptothrix</taxon>
    </lineage>
</organism>
<name>RL13_LEPCP</name>
<sequence length="142" mass="15783">MNTFSAKPAEVVHEWFVIDATDKVLGRVASEVALRLRGKHKAIYTPHVDTGDFIVVVNAEKLRVTGTKSIDKKYYRHSGYPGGIFETNFRDMQAKHPGRALQKAVKGMLPKGPLGYAMIKKLKVYAGDTHPHAAQQPKTLDI</sequence>
<keyword id="KW-1185">Reference proteome</keyword>
<keyword id="KW-0687">Ribonucleoprotein</keyword>
<keyword id="KW-0689">Ribosomal protein</keyword>
<reference key="1">
    <citation type="submission" date="2008-03" db="EMBL/GenBank/DDBJ databases">
        <title>Complete sequence of Leptothrix cholodnii SP-6.</title>
        <authorList>
            <consortium name="US DOE Joint Genome Institute"/>
            <person name="Copeland A."/>
            <person name="Lucas S."/>
            <person name="Lapidus A."/>
            <person name="Glavina del Rio T."/>
            <person name="Dalin E."/>
            <person name="Tice H."/>
            <person name="Bruce D."/>
            <person name="Goodwin L."/>
            <person name="Pitluck S."/>
            <person name="Chertkov O."/>
            <person name="Brettin T."/>
            <person name="Detter J.C."/>
            <person name="Han C."/>
            <person name="Kuske C.R."/>
            <person name="Schmutz J."/>
            <person name="Larimer F."/>
            <person name="Land M."/>
            <person name="Hauser L."/>
            <person name="Kyrpides N."/>
            <person name="Lykidis A."/>
            <person name="Emerson D."/>
            <person name="Richardson P."/>
        </authorList>
    </citation>
    <scope>NUCLEOTIDE SEQUENCE [LARGE SCALE GENOMIC DNA]</scope>
    <source>
        <strain>ATCC 51168 / LMG 8142 / SP-6</strain>
    </source>
</reference>